<protein>
    <recommendedName>
        <fullName evidence="1">Deoxyribose-phosphate aldolase</fullName>
        <shortName evidence="1">DERA</shortName>
        <ecNumber evidence="1">4.1.2.4</ecNumber>
    </recommendedName>
    <alternativeName>
        <fullName evidence="1">2-deoxy-D-ribose 5-phosphate aldolase</fullName>
    </alternativeName>
    <alternativeName>
        <fullName evidence="1">Phosphodeoxyriboaldolase</fullName>
        <shortName evidence="1">Deoxyriboaldolase</shortName>
    </alternativeName>
</protein>
<evidence type="ECO:0000255" key="1">
    <source>
        <dbReference type="HAMAP-Rule" id="MF_00592"/>
    </source>
</evidence>
<gene>
    <name evidence="1" type="primary">deoC</name>
    <name type="ordered locus">VF_0504</name>
</gene>
<comment type="function">
    <text evidence="1">Catalyzes a reversible aldol reaction between acetaldehyde and D-glyceraldehyde 3-phosphate to generate 2-deoxy-D-ribose 5-phosphate.</text>
</comment>
<comment type="catalytic activity">
    <reaction evidence="1">
        <text>2-deoxy-D-ribose 5-phosphate = D-glyceraldehyde 3-phosphate + acetaldehyde</text>
        <dbReference type="Rhea" id="RHEA:12821"/>
        <dbReference type="ChEBI" id="CHEBI:15343"/>
        <dbReference type="ChEBI" id="CHEBI:59776"/>
        <dbReference type="ChEBI" id="CHEBI:62877"/>
        <dbReference type="EC" id="4.1.2.4"/>
    </reaction>
</comment>
<comment type="pathway">
    <text evidence="1">Carbohydrate degradation; 2-deoxy-D-ribose 1-phosphate degradation; D-glyceraldehyde 3-phosphate and acetaldehyde from 2-deoxy-alpha-D-ribose 1-phosphate: step 2/2.</text>
</comment>
<comment type="subcellular location">
    <subcellularLocation>
        <location evidence="1">Cytoplasm</location>
    </subcellularLocation>
</comment>
<comment type="similarity">
    <text evidence="1">Belongs to the DeoC/FbaB aldolase family. DeoC type 2 subfamily.</text>
</comment>
<dbReference type="EC" id="4.1.2.4" evidence="1"/>
<dbReference type="EMBL" id="CP000020">
    <property type="protein sequence ID" value="AAW84999.1"/>
    <property type="molecule type" value="Genomic_DNA"/>
</dbReference>
<dbReference type="RefSeq" id="WP_005417709.1">
    <property type="nucleotide sequence ID" value="NZ_CAWLES010000001.1"/>
</dbReference>
<dbReference type="RefSeq" id="YP_203887.1">
    <property type="nucleotide sequence ID" value="NC_006840.2"/>
</dbReference>
<dbReference type="SMR" id="Q5E7J7"/>
<dbReference type="STRING" id="312309.VF_0504"/>
<dbReference type="EnsemblBacteria" id="AAW84999">
    <property type="protein sequence ID" value="AAW84999"/>
    <property type="gene ID" value="VF_0504"/>
</dbReference>
<dbReference type="GeneID" id="54163141"/>
<dbReference type="KEGG" id="vfi:VF_0504"/>
<dbReference type="PATRIC" id="fig|312309.11.peg.495"/>
<dbReference type="eggNOG" id="COG0274">
    <property type="taxonomic scope" value="Bacteria"/>
</dbReference>
<dbReference type="HOGENOM" id="CLU_053595_3_1_6"/>
<dbReference type="OrthoDB" id="6579831at2"/>
<dbReference type="UniPathway" id="UPA00002">
    <property type="reaction ID" value="UER00468"/>
</dbReference>
<dbReference type="Proteomes" id="UP000000537">
    <property type="component" value="Chromosome I"/>
</dbReference>
<dbReference type="GO" id="GO:0005737">
    <property type="term" value="C:cytoplasm"/>
    <property type="evidence" value="ECO:0007669"/>
    <property type="project" value="UniProtKB-SubCell"/>
</dbReference>
<dbReference type="GO" id="GO:0004139">
    <property type="term" value="F:deoxyribose-phosphate aldolase activity"/>
    <property type="evidence" value="ECO:0007669"/>
    <property type="project" value="UniProtKB-UniRule"/>
</dbReference>
<dbReference type="GO" id="GO:0006018">
    <property type="term" value="P:2-deoxyribose 1-phosphate catabolic process"/>
    <property type="evidence" value="ECO:0007669"/>
    <property type="project" value="UniProtKB-UniRule"/>
</dbReference>
<dbReference type="GO" id="GO:0016052">
    <property type="term" value="P:carbohydrate catabolic process"/>
    <property type="evidence" value="ECO:0007669"/>
    <property type="project" value="TreeGrafter"/>
</dbReference>
<dbReference type="GO" id="GO:0009264">
    <property type="term" value="P:deoxyribonucleotide catabolic process"/>
    <property type="evidence" value="ECO:0007669"/>
    <property type="project" value="InterPro"/>
</dbReference>
<dbReference type="CDD" id="cd00959">
    <property type="entry name" value="DeoC"/>
    <property type="match status" value="1"/>
</dbReference>
<dbReference type="FunFam" id="3.20.20.70:FF:000034">
    <property type="entry name" value="Deoxyribose-phosphate aldolase"/>
    <property type="match status" value="1"/>
</dbReference>
<dbReference type="Gene3D" id="3.20.20.70">
    <property type="entry name" value="Aldolase class I"/>
    <property type="match status" value="1"/>
</dbReference>
<dbReference type="HAMAP" id="MF_00592">
    <property type="entry name" value="DeoC_type2"/>
    <property type="match status" value="1"/>
</dbReference>
<dbReference type="InterPro" id="IPR013785">
    <property type="entry name" value="Aldolase_TIM"/>
</dbReference>
<dbReference type="InterPro" id="IPR011343">
    <property type="entry name" value="DeoC"/>
</dbReference>
<dbReference type="InterPro" id="IPR002915">
    <property type="entry name" value="DeoC/FbaB/LacD_aldolase"/>
</dbReference>
<dbReference type="InterPro" id="IPR023649">
    <property type="entry name" value="DeoC_typeII"/>
</dbReference>
<dbReference type="NCBIfam" id="TIGR00126">
    <property type="entry name" value="deoC"/>
    <property type="match status" value="1"/>
</dbReference>
<dbReference type="PANTHER" id="PTHR10889">
    <property type="entry name" value="DEOXYRIBOSE-PHOSPHATE ALDOLASE"/>
    <property type="match status" value="1"/>
</dbReference>
<dbReference type="PANTHER" id="PTHR10889:SF3">
    <property type="entry name" value="DEOXYRIBOSE-PHOSPHATE ALDOLASE"/>
    <property type="match status" value="1"/>
</dbReference>
<dbReference type="Pfam" id="PF01791">
    <property type="entry name" value="DeoC"/>
    <property type="match status" value="1"/>
</dbReference>
<dbReference type="PIRSF" id="PIRSF001357">
    <property type="entry name" value="DeoC"/>
    <property type="match status" value="1"/>
</dbReference>
<dbReference type="SMART" id="SM01133">
    <property type="entry name" value="DeoC"/>
    <property type="match status" value="1"/>
</dbReference>
<dbReference type="SUPFAM" id="SSF51569">
    <property type="entry name" value="Aldolase"/>
    <property type="match status" value="1"/>
</dbReference>
<accession>Q5E7J7</accession>
<keyword id="KW-0963">Cytoplasm</keyword>
<keyword id="KW-0456">Lyase</keyword>
<keyword id="KW-1185">Reference proteome</keyword>
<keyword id="KW-0704">Schiff base</keyword>
<name>DEOC_ALIF1</name>
<proteinExistence type="inferred from homology"/>
<reference key="1">
    <citation type="journal article" date="2005" name="Proc. Natl. Acad. Sci. U.S.A.">
        <title>Complete genome sequence of Vibrio fischeri: a symbiotic bacterium with pathogenic congeners.</title>
        <authorList>
            <person name="Ruby E.G."/>
            <person name="Urbanowski M."/>
            <person name="Campbell J."/>
            <person name="Dunn A."/>
            <person name="Faini M."/>
            <person name="Gunsalus R."/>
            <person name="Lostroh P."/>
            <person name="Lupp C."/>
            <person name="McCann J."/>
            <person name="Millikan D."/>
            <person name="Schaefer A."/>
            <person name="Stabb E."/>
            <person name="Stevens A."/>
            <person name="Visick K."/>
            <person name="Whistler C."/>
            <person name="Greenberg E.P."/>
        </authorList>
    </citation>
    <scope>NUCLEOTIDE SEQUENCE [LARGE SCALE GENOMIC DNA]</scope>
    <source>
        <strain>ATCC 700601 / ES114</strain>
    </source>
</reference>
<feature type="chain" id="PRO_1000072617" description="Deoxyribose-phosphate aldolase">
    <location>
        <begin position="1"/>
        <end position="258"/>
    </location>
</feature>
<feature type="active site" description="Proton donor/acceptor" evidence="1">
    <location>
        <position position="102"/>
    </location>
</feature>
<feature type="active site" description="Schiff-base intermediate with acetaldehyde" evidence="1">
    <location>
        <position position="165"/>
    </location>
</feature>
<feature type="active site" description="Proton donor/acceptor" evidence="1">
    <location>
        <position position="199"/>
    </location>
</feature>
<sequence>MSDLKAAALRALKLMDLTTLNDNDTDEAVIALCKNAKTAVGNTAAVCIYPRFIPIAKKTLREQGTPEVRIATVTNFPHGNDDIEIAVAETKAAVAYGADEVDVVFPYRALIAGDETTGFELVKQCKEACGDVLLKVIIETGELKEEALIKKASQICIEAGANFIKTSTGKVPVNATPEYARMMLEVIRDMDVAKTVGFKPAGGVRTAEDAQAYLAMADDILGGDWADNMHYRFGASSLLTNLLNTLEVTEETADPSAY</sequence>
<organism>
    <name type="scientific">Aliivibrio fischeri (strain ATCC 700601 / ES114)</name>
    <name type="common">Vibrio fischeri</name>
    <dbReference type="NCBI Taxonomy" id="312309"/>
    <lineage>
        <taxon>Bacteria</taxon>
        <taxon>Pseudomonadati</taxon>
        <taxon>Pseudomonadota</taxon>
        <taxon>Gammaproteobacteria</taxon>
        <taxon>Vibrionales</taxon>
        <taxon>Vibrionaceae</taxon>
        <taxon>Aliivibrio</taxon>
    </lineage>
</organism>